<name>GSA_ARTS2</name>
<proteinExistence type="inferred from homology"/>
<reference key="1">
    <citation type="journal article" date="2013" name="Stand. Genomic Sci.">
        <title>Complete genome sequence of Arthrobacter sp. strain FB24.</title>
        <authorList>
            <person name="Nakatsu C.H."/>
            <person name="Barabote R."/>
            <person name="Thompson S."/>
            <person name="Bruce D."/>
            <person name="Detter C."/>
            <person name="Brettin T."/>
            <person name="Han C."/>
            <person name="Beasley F."/>
            <person name="Chen W."/>
            <person name="Konopka A."/>
            <person name="Xie G."/>
        </authorList>
    </citation>
    <scope>NUCLEOTIDE SEQUENCE [LARGE SCALE GENOMIC DNA]</scope>
    <source>
        <strain>FB24</strain>
    </source>
</reference>
<sequence length="447" mass="45602">MTSSSPRNEALFDRARQLMPGGVNSPVRAFGSVGGTPRFMVSAKGAYLTDADGAEYVDLVCSWGPALLGHAHPAVLEAVHAAVDRGLSFGASTPDEANLAAIVKERVPAAERVRMVSTGTEATMTAIRLARGFTGRDLVIKFAGCYHGHLDGLLAAAGSGVATLALPGSAGVTAATAAETLVLPYNDLAAVEAAFAAHGSNIAAVITEAAPANMGVVTPGEGFNAGLSRITREHGALLIVDEVLTGFRTGYSGYWGLTGGAADAAEPWSPDLLTFGKVIGGGMPTAALGGRADIMDYLAPLGPVYQAGTLSGNPVAMAAGVATLAHATPEVYSFIDARSLELSAALSSALDAAGVDHSIQRAGNLFSVAFGTSARGVHNYDDAQGQEVFRYAPFFHSMLDSGVYLPPSVFEAWFLSAAHDDAAMNRIFDALPAAARAAASAAVPAGL</sequence>
<evidence type="ECO:0000255" key="1">
    <source>
        <dbReference type="HAMAP-Rule" id="MF_00375"/>
    </source>
</evidence>
<protein>
    <recommendedName>
        <fullName evidence="1">Glutamate-1-semialdehyde 2,1-aminomutase</fullName>
        <shortName evidence="1">GSA</shortName>
        <ecNumber evidence="1">5.4.3.8</ecNumber>
    </recommendedName>
    <alternativeName>
        <fullName evidence="1">Glutamate-1-semialdehyde aminotransferase</fullName>
        <shortName evidence="1">GSA-AT</shortName>
    </alternativeName>
</protein>
<dbReference type="EC" id="5.4.3.8" evidence="1"/>
<dbReference type="EMBL" id="CP000454">
    <property type="protein sequence ID" value="ABK04142.1"/>
    <property type="molecule type" value="Genomic_DNA"/>
</dbReference>
<dbReference type="RefSeq" id="WP_011692603.1">
    <property type="nucleotide sequence ID" value="NC_008541.1"/>
</dbReference>
<dbReference type="SMR" id="A0JYM2"/>
<dbReference type="STRING" id="290399.Arth_2763"/>
<dbReference type="KEGG" id="art:Arth_2763"/>
<dbReference type="eggNOG" id="COG0001">
    <property type="taxonomic scope" value="Bacteria"/>
</dbReference>
<dbReference type="HOGENOM" id="CLU_016922_1_5_11"/>
<dbReference type="OrthoDB" id="9801052at2"/>
<dbReference type="UniPathway" id="UPA00251">
    <property type="reaction ID" value="UER00317"/>
</dbReference>
<dbReference type="Proteomes" id="UP000000754">
    <property type="component" value="Chromosome"/>
</dbReference>
<dbReference type="GO" id="GO:0005737">
    <property type="term" value="C:cytoplasm"/>
    <property type="evidence" value="ECO:0007669"/>
    <property type="project" value="UniProtKB-SubCell"/>
</dbReference>
<dbReference type="GO" id="GO:0042286">
    <property type="term" value="F:glutamate-1-semialdehyde 2,1-aminomutase activity"/>
    <property type="evidence" value="ECO:0007669"/>
    <property type="project" value="UniProtKB-UniRule"/>
</dbReference>
<dbReference type="GO" id="GO:0030170">
    <property type="term" value="F:pyridoxal phosphate binding"/>
    <property type="evidence" value="ECO:0007669"/>
    <property type="project" value="InterPro"/>
</dbReference>
<dbReference type="GO" id="GO:0008483">
    <property type="term" value="F:transaminase activity"/>
    <property type="evidence" value="ECO:0007669"/>
    <property type="project" value="InterPro"/>
</dbReference>
<dbReference type="GO" id="GO:0006782">
    <property type="term" value="P:protoporphyrinogen IX biosynthetic process"/>
    <property type="evidence" value="ECO:0007669"/>
    <property type="project" value="UniProtKB-UniRule"/>
</dbReference>
<dbReference type="CDD" id="cd00610">
    <property type="entry name" value="OAT_like"/>
    <property type="match status" value="1"/>
</dbReference>
<dbReference type="FunFam" id="3.40.640.10:FF:000021">
    <property type="entry name" value="Glutamate-1-semialdehyde 2,1-aminomutase"/>
    <property type="match status" value="1"/>
</dbReference>
<dbReference type="Gene3D" id="3.90.1150.10">
    <property type="entry name" value="Aspartate Aminotransferase, domain 1"/>
    <property type="match status" value="1"/>
</dbReference>
<dbReference type="Gene3D" id="3.40.640.10">
    <property type="entry name" value="Type I PLP-dependent aspartate aminotransferase-like (Major domain)"/>
    <property type="match status" value="1"/>
</dbReference>
<dbReference type="HAMAP" id="MF_00375">
    <property type="entry name" value="HemL_aminotrans_3"/>
    <property type="match status" value="1"/>
</dbReference>
<dbReference type="InterPro" id="IPR004639">
    <property type="entry name" value="4pyrrol_synth_GluAld_NH2Trfase"/>
</dbReference>
<dbReference type="InterPro" id="IPR005814">
    <property type="entry name" value="Aminotrans_3"/>
</dbReference>
<dbReference type="InterPro" id="IPR015424">
    <property type="entry name" value="PyrdxlP-dep_Trfase"/>
</dbReference>
<dbReference type="InterPro" id="IPR015421">
    <property type="entry name" value="PyrdxlP-dep_Trfase_major"/>
</dbReference>
<dbReference type="InterPro" id="IPR015422">
    <property type="entry name" value="PyrdxlP-dep_Trfase_small"/>
</dbReference>
<dbReference type="NCBIfam" id="TIGR00713">
    <property type="entry name" value="hemL"/>
    <property type="match status" value="1"/>
</dbReference>
<dbReference type="NCBIfam" id="NF000818">
    <property type="entry name" value="PRK00062.1"/>
    <property type="match status" value="1"/>
</dbReference>
<dbReference type="PANTHER" id="PTHR43713">
    <property type="entry name" value="GLUTAMATE-1-SEMIALDEHYDE 2,1-AMINOMUTASE"/>
    <property type="match status" value="1"/>
</dbReference>
<dbReference type="PANTHER" id="PTHR43713:SF3">
    <property type="entry name" value="GLUTAMATE-1-SEMIALDEHYDE 2,1-AMINOMUTASE 1, CHLOROPLASTIC-RELATED"/>
    <property type="match status" value="1"/>
</dbReference>
<dbReference type="Pfam" id="PF00202">
    <property type="entry name" value="Aminotran_3"/>
    <property type="match status" value="1"/>
</dbReference>
<dbReference type="SUPFAM" id="SSF53383">
    <property type="entry name" value="PLP-dependent transferases"/>
    <property type="match status" value="1"/>
</dbReference>
<comment type="catalytic activity">
    <reaction evidence="1">
        <text>(S)-4-amino-5-oxopentanoate = 5-aminolevulinate</text>
        <dbReference type="Rhea" id="RHEA:14265"/>
        <dbReference type="ChEBI" id="CHEBI:57501"/>
        <dbReference type="ChEBI" id="CHEBI:356416"/>
        <dbReference type="EC" id="5.4.3.8"/>
    </reaction>
</comment>
<comment type="cofactor">
    <cofactor evidence="1">
        <name>pyridoxal 5'-phosphate</name>
        <dbReference type="ChEBI" id="CHEBI:597326"/>
    </cofactor>
</comment>
<comment type="pathway">
    <text evidence="1">Porphyrin-containing compound metabolism; protoporphyrin-IX biosynthesis; 5-aminolevulinate from L-glutamyl-tRNA(Glu): step 2/2.</text>
</comment>
<comment type="subunit">
    <text evidence="1">Homodimer.</text>
</comment>
<comment type="subcellular location">
    <subcellularLocation>
        <location evidence="1">Cytoplasm</location>
    </subcellularLocation>
</comment>
<comment type="similarity">
    <text evidence="1">Belongs to the class-III pyridoxal-phosphate-dependent aminotransferase family. HemL subfamily.</text>
</comment>
<keyword id="KW-0963">Cytoplasm</keyword>
<keyword id="KW-0413">Isomerase</keyword>
<keyword id="KW-0627">Porphyrin biosynthesis</keyword>
<keyword id="KW-0663">Pyridoxal phosphate</keyword>
<keyword id="KW-1185">Reference proteome</keyword>
<organism>
    <name type="scientific">Arthrobacter sp. (strain FB24)</name>
    <dbReference type="NCBI Taxonomy" id="290399"/>
    <lineage>
        <taxon>Bacteria</taxon>
        <taxon>Bacillati</taxon>
        <taxon>Actinomycetota</taxon>
        <taxon>Actinomycetes</taxon>
        <taxon>Micrococcales</taxon>
        <taxon>Micrococcaceae</taxon>
        <taxon>Arthrobacter</taxon>
    </lineage>
</organism>
<gene>
    <name evidence="1" type="primary">hemL</name>
    <name type="ordered locus">Arth_2763</name>
</gene>
<feature type="chain" id="PRO_0000382255" description="Glutamate-1-semialdehyde 2,1-aminomutase">
    <location>
        <begin position="1"/>
        <end position="447"/>
    </location>
</feature>
<feature type="modified residue" description="N6-(pyridoxal phosphate)lysine" evidence="1">
    <location>
        <position position="277"/>
    </location>
</feature>
<accession>A0JYM2</accession>